<evidence type="ECO:0000255" key="1"/>
<evidence type="ECO:0000255" key="2">
    <source>
        <dbReference type="PROSITE-ProRule" id="PRU00114"/>
    </source>
</evidence>
<evidence type="ECO:0000305" key="3"/>
<evidence type="ECO:0000312" key="4">
    <source>
        <dbReference type="MGI" id="MGI:3648045"/>
    </source>
</evidence>
<feature type="signal peptide" evidence="1">
    <location>
        <begin position="1"/>
        <end position="18"/>
    </location>
</feature>
<feature type="chain" id="PRO_0000015243" description="Immunoglobulin heavy variable 3-5" evidence="1">
    <location>
        <begin position="19"/>
        <end position="117"/>
    </location>
</feature>
<feature type="domain" description="Ig-like" evidence="2">
    <location>
        <begin position="19"/>
        <end position="117" status="greater than"/>
    </location>
</feature>
<feature type="disulfide bond" evidence="2">
    <location>
        <begin position="40"/>
        <end position="115"/>
    </location>
</feature>
<feature type="non-terminal residue">
    <location>
        <position position="117"/>
    </location>
</feature>
<dbReference type="PIR" id="JT0510">
    <property type="entry name" value="HVMS73"/>
</dbReference>
<dbReference type="SMR" id="P18533"/>
<dbReference type="FunCoup" id="P18533">
    <property type="interactions" value="598"/>
</dbReference>
<dbReference type="AGR" id="MGI:3648045"/>
<dbReference type="MGI" id="MGI:3648045">
    <property type="gene designation" value="Ighv3-5"/>
</dbReference>
<dbReference type="InParanoid" id="P18533"/>
<dbReference type="Reactome" id="R-MMU-166663">
    <property type="pathway name" value="Initial triggering of complement"/>
</dbReference>
<dbReference type="Reactome" id="R-MMU-173623">
    <property type="pathway name" value="Classical antibody-mediated complement activation"/>
</dbReference>
<dbReference type="Reactome" id="R-MMU-198933">
    <property type="pathway name" value="Immunoregulatory interactions between a Lymphoid and a non-Lymphoid cell"/>
</dbReference>
<dbReference type="Reactome" id="R-MMU-202733">
    <property type="pathway name" value="Cell surface interactions at the vascular wall"/>
</dbReference>
<dbReference type="Reactome" id="R-MMU-2029481">
    <property type="pathway name" value="FCGR activation"/>
</dbReference>
<dbReference type="Reactome" id="R-MMU-2029482">
    <property type="pathway name" value="Regulation of actin dynamics for phagocytic cup formation"/>
</dbReference>
<dbReference type="Reactome" id="R-MMU-2029485">
    <property type="pathway name" value="Role of phospholipids in phagocytosis"/>
</dbReference>
<dbReference type="Reactome" id="R-MMU-2168880">
    <property type="pathway name" value="Scavenging of heme from plasma"/>
</dbReference>
<dbReference type="Reactome" id="R-MMU-2454202">
    <property type="pathway name" value="Fc epsilon receptor (FCERI) signaling"/>
</dbReference>
<dbReference type="Reactome" id="R-MMU-2730905">
    <property type="pathway name" value="Role of LAT2/NTAL/LAB on calcium mobilization"/>
</dbReference>
<dbReference type="Reactome" id="R-MMU-2871796">
    <property type="pathway name" value="FCERI mediated MAPK activation"/>
</dbReference>
<dbReference type="Reactome" id="R-MMU-2871809">
    <property type="pathway name" value="FCERI mediated Ca+2 mobilization"/>
</dbReference>
<dbReference type="Reactome" id="R-MMU-2871837">
    <property type="pathway name" value="FCERI mediated NF-kB activation"/>
</dbReference>
<dbReference type="Reactome" id="R-MMU-5690714">
    <property type="pathway name" value="CD22 mediated BCR regulation"/>
</dbReference>
<dbReference type="Reactome" id="R-MMU-977606">
    <property type="pathway name" value="Regulation of Complement cascade"/>
</dbReference>
<dbReference type="Reactome" id="R-MMU-983695">
    <property type="pathway name" value="Antigen activates B Cell Receptor (BCR) leading to generation of second messengers"/>
</dbReference>
<dbReference type="PRO" id="PR:P18533"/>
<dbReference type="Proteomes" id="UP000000589">
    <property type="component" value="Unplaced"/>
</dbReference>
<dbReference type="RNAct" id="P18533">
    <property type="molecule type" value="protein"/>
</dbReference>
<dbReference type="GO" id="GO:0005576">
    <property type="term" value="C:extracellular region"/>
    <property type="evidence" value="ECO:0007669"/>
    <property type="project" value="UniProtKB-ARBA"/>
</dbReference>
<dbReference type="GO" id="GO:0019814">
    <property type="term" value="C:immunoglobulin complex"/>
    <property type="evidence" value="ECO:0007669"/>
    <property type="project" value="UniProtKB-KW"/>
</dbReference>
<dbReference type="GO" id="GO:0002250">
    <property type="term" value="P:adaptive immune response"/>
    <property type="evidence" value="ECO:0007669"/>
    <property type="project" value="UniProtKB-KW"/>
</dbReference>
<dbReference type="FunFam" id="2.60.40.10:FF:001878">
    <property type="entry name" value="Immunoglobulin heavy variable 1-4"/>
    <property type="match status" value="1"/>
</dbReference>
<dbReference type="Gene3D" id="2.60.40.10">
    <property type="entry name" value="Immunoglobulins"/>
    <property type="match status" value="1"/>
</dbReference>
<dbReference type="InterPro" id="IPR007110">
    <property type="entry name" value="Ig-like_dom"/>
</dbReference>
<dbReference type="InterPro" id="IPR036179">
    <property type="entry name" value="Ig-like_dom_sf"/>
</dbReference>
<dbReference type="InterPro" id="IPR013783">
    <property type="entry name" value="Ig-like_fold"/>
</dbReference>
<dbReference type="InterPro" id="IPR013106">
    <property type="entry name" value="Ig_V-set"/>
</dbReference>
<dbReference type="InterPro" id="IPR050199">
    <property type="entry name" value="IgHV"/>
</dbReference>
<dbReference type="PANTHER" id="PTHR23266">
    <property type="entry name" value="IMMUNOGLOBULIN HEAVY CHAIN"/>
    <property type="match status" value="1"/>
</dbReference>
<dbReference type="Pfam" id="PF07686">
    <property type="entry name" value="V-set"/>
    <property type="match status" value="1"/>
</dbReference>
<dbReference type="SMART" id="SM00406">
    <property type="entry name" value="IGv"/>
    <property type="match status" value="1"/>
</dbReference>
<dbReference type="SUPFAM" id="SSF48726">
    <property type="entry name" value="Immunoglobulin"/>
    <property type="match status" value="1"/>
</dbReference>
<dbReference type="PROSITE" id="PS50835">
    <property type="entry name" value="IG_LIKE"/>
    <property type="match status" value="1"/>
</dbReference>
<keyword id="KW-1064">Adaptive immunity</keyword>
<keyword id="KW-1015">Disulfide bond</keyword>
<keyword id="KW-0391">Immunity</keyword>
<keyword id="KW-1280">Immunoglobulin</keyword>
<keyword id="KW-0393">Immunoglobulin domain</keyword>
<keyword id="KW-1185">Reference proteome</keyword>
<keyword id="KW-0732">Signal</keyword>
<accession>P18533</accession>
<organism>
    <name type="scientific">Mus musculus</name>
    <name type="common">Mouse</name>
    <dbReference type="NCBI Taxonomy" id="10090"/>
    <lineage>
        <taxon>Eukaryota</taxon>
        <taxon>Metazoa</taxon>
        <taxon>Chordata</taxon>
        <taxon>Craniata</taxon>
        <taxon>Vertebrata</taxon>
        <taxon>Euteleostomi</taxon>
        <taxon>Mammalia</taxon>
        <taxon>Eutheria</taxon>
        <taxon>Euarchontoglires</taxon>
        <taxon>Glires</taxon>
        <taxon>Rodentia</taxon>
        <taxon>Myomorpha</taxon>
        <taxon>Muroidea</taxon>
        <taxon>Muridae</taxon>
        <taxon>Murinae</taxon>
        <taxon>Mus</taxon>
        <taxon>Mus</taxon>
    </lineage>
</organism>
<gene>
    <name evidence="4" type="primary">Ighv3-5</name>
</gene>
<sequence length="117" mass="13223">MKMFTLLYLLTVVPGILSDVQLQESGPGLVKPSQSIALTCTVTGISITTGNYRWSWIRQFPGNKLEWIGYIYYSAITSYNPSPKSRTTITRDTSKNQFFLEMNSLTAEDTATYYCAR</sequence>
<proteinExistence type="inferred from homology"/>
<name>HVM62_MOUSE</name>
<protein>
    <recommendedName>
        <fullName evidence="4">Immunoglobulin heavy variable 3-5</fullName>
    </recommendedName>
    <alternativeName>
        <fullName evidence="3">Ig heavy chain V region 733</fullName>
    </alternativeName>
</protein>
<reference key="1">
    <citation type="journal article" date="1989" name="J. Exp. Med.">
        <title>Early onset of somatic mutation in immunoglobulin VH genes during the primary immune response.</title>
        <authorList>
            <person name="Levy N.S."/>
            <person name="Malipiero U.V."/>
            <person name="Lebecque S.G."/>
            <person name="Gearhart P.J."/>
        </authorList>
    </citation>
    <scope>NUCLEOTIDE SEQUENCE</scope>
    <source>
        <strain>BALB/cJ</strain>
    </source>
</reference>